<organism>
    <name type="scientific">Arabidopsis thaliana</name>
    <name type="common">Mouse-ear cress</name>
    <dbReference type="NCBI Taxonomy" id="3702"/>
    <lineage>
        <taxon>Eukaryota</taxon>
        <taxon>Viridiplantae</taxon>
        <taxon>Streptophyta</taxon>
        <taxon>Embryophyta</taxon>
        <taxon>Tracheophyta</taxon>
        <taxon>Spermatophyta</taxon>
        <taxon>Magnoliopsida</taxon>
        <taxon>eudicotyledons</taxon>
        <taxon>Gunneridae</taxon>
        <taxon>Pentapetalae</taxon>
        <taxon>rosids</taxon>
        <taxon>malvids</taxon>
        <taxon>Brassicales</taxon>
        <taxon>Brassicaceae</taxon>
        <taxon>Camelineae</taxon>
        <taxon>Arabidopsis</taxon>
    </lineage>
</organism>
<comment type="function">
    <text evidence="4 7">Converts proline to delta-1-pyrroline-5-carboxylate.</text>
</comment>
<comment type="catalytic activity">
    <reaction evidence="10">
        <text>L-proline + a quinone = (S)-1-pyrroline-5-carboxylate + a quinol + H(+)</text>
        <dbReference type="Rhea" id="RHEA:23784"/>
        <dbReference type="ChEBI" id="CHEBI:15378"/>
        <dbReference type="ChEBI" id="CHEBI:17388"/>
        <dbReference type="ChEBI" id="CHEBI:24646"/>
        <dbReference type="ChEBI" id="CHEBI:60039"/>
        <dbReference type="ChEBI" id="CHEBI:132124"/>
        <dbReference type="EC" id="1.5.5.2"/>
    </reaction>
</comment>
<comment type="cofactor">
    <cofactor>
        <name>FAD</name>
        <dbReference type="ChEBI" id="CHEBI:57692"/>
    </cofactor>
</comment>
<comment type="pathway">
    <text>Amino-acid degradation; L-proline degradation into L-glutamate; L-glutamate from L-proline: step 1/2.</text>
</comment>
<comment type="subcellular location">
    <subcellularLocation>
        <location evidence="4 7 9">Mitochondrion</location>
    </subcellularLocation>
</comment>
<comment type="tissue specificity">
    <text evidence="4 7">Ubiquitous. Highest expression in pollen grains, in the stigma and in developing embryos.</text>
</comment>
<comment type="induction">
    <text evidence="2 3 4 6 7">Down-regulated by salt or drought stress. Up-regulated by proline, hypoosmolarity or rehydration (PubMed:17106685, PubMed:20403182, PubMed:9003320, PubMed:9847097). Activated by BZIP53 (PubMed:16810321).</text>
</comment>
<comment type="disruption phenotype">
    <text evidence="1 4">No visible phenotype when grown under normal conditions. Proline hypersensitivity.</text>
</comment>
<comment type="similarity">
    <text evidence="8">Belongs to the proline oxidase family.</text>
</comment>
<reference key="1">
    <citation type="journal article" date="1996" name="Mol. Gen. Genet.">
        <title>Reciprocal regulation of delta 1-pyrroline-5-carboxylate synthetase and proline dehydrogenase genes controls proline levels during and after osmotic stress in plants.</title>
        <authorList>
            <person name="Peng Z."/>
            <person name="Lu Q."/>
            <person name="Verma D.P.S."/>
        </authorList>
    </citation>
    <scope>NUCLEOTIDE SEQUENCE [MRNA]</scope>
    <scope>INDUCTION</scope>
    <source>
        <strain>cv. Columbia</strain>
    </source>
</reference>
<reference key="2">
    <citation type="journal article" date="1996" name="Proc. Natl. Acad. Sci. U.S.A.">
        <title>Environmental and developmental signals modulate proline homeostasis: evidence for a negative transcriptional regulator.</title>
        <authorList>
            <person name="Verbruggen N."/>
            <person name="Hua X.J."/>
            <person name="May M."/>
            <person name="van Montagu M."/>
        </authorList>
    </citation>
    <scope>NUCLEOTIDE SEQUENCE [MRNA]</scope>
    <source>
        <strain>cv. Columbia</strain>
        <tissue>Root</tissue>
    </source>
</reference>
<reference key="3">
    <citation type="journal article" date="1996" name="Plant Cell">
        <title>A nuclear gene encoding mitochondrial proline dehydrogenase, an enzyme involved in proline metabolism, is upregulated by proline but downregulated by dehydration in Arabidopsis.</title>
        <authorList>
            <person name="Kiyosue T."/>
            <person name="Yoshiba Y."/>
            <person name="Yamaguchi-Shinozaki K."/>
            <person name="Shinozaki K."/>
        </authorList>
    </citation>
    <scope>NUCLEOTIDE SEQUENCE [MRNA]</scope>
    <scope>CATALYTIC ACTIVITY</scope>
    <source>
        <strain>cv. Columbia</strain>
    </source>
</reference>
<reference key="4">
    <citation type="journal article" date="2000" name="DNA Res.">
        <title>Structural analysis of Arabidopsis thaliana chromosome 3. I. Sequence features of the regions of 4,504,864 bp covered by sixty P1 and TAC clones.</title>
        <authorList>
            <person name="Sato S."/>
            <person name="Nakamura Y."/>
            <person name="Kaneko T."/>
            <person name="Katoh T."/>
            <person name="Asamizu E."/>
            <person name="Tabata S."/>
        </authorList>
    </citation>
    <scope>NUCLEOTIDE SEQUENCE [LARGE SCALE GENOMIC DNA]</scope>
    <source>
        <strain>cv. Columbia</strain>
    </source>
</reference>
<reference key="5">
    <citation type="journal article" date="2000" name="DNA Res.">
        <title>Structural analysis of Arabidopsis thaliana chromosome 3. II. Sequence features of the 4,251,695 bp regions covered by 90 P1, TAC and BAC clones.</title>
        <authorList>
            <person name="Kaneko T."/>
            <person name="Katoh T."/>
            <person name="Sato S."/>
            <person name="Nakamura Y."/>
            <person name="Asamizu E."/>
            <person name="Tabata S."/>
        </authorList>
    </citation>
    <scope>NUCLEOTIDE SEQUENCE [LARGE SCALE GENOMIC DNA]</scope>
    <source>
        <strain>cv. Columbia</strain>
    </source>
</reference>
<reference key="6">
    <citation type="journal article" date="2017" name="Plant J.">
        <title>Araport11: a complete reannotation of the Arabidopsis thaliana reference genome.</title>
        <authorList>
            <person name="Cheng C.Y."/>
            <person name="Krishnakumar V."/>
            <person name="Chan A.P."/>
            <person name="Thibaud-Nissen F."/>
            <person name="Schobel S."/>
            <person name="Town C.D."/>
        </authorList>
    </citation>
    <scope>GENOME REANNOTATION</scope>
    <source>
        <strain>cv. Columbia</strain>
    </source>
</reference>
<reference key="7">
    <citation type="journal article" date="2003" name="Science">
        <title>Empirical analysis of transcriptional activity in the Arabidopsis genome.</title>
        <authorList>
            <person name="Yamada K."/>
            <person name="Lim J."/>
            <person name="Dale J.M."/>
            <person name="Chen H."/>
            <person name="Shinn P."/>
            <person name="Palm C.J."/>
            <person name="Southwick A.M."/>
            <person name="Wu H.C."/>
            <person name="Kim C.J."/>
            <person name="Nguyen M."/>
            <person name="Pham P.K."/>
            <person name="Cheuk R.F."/>
            <person name="Karlin-Newmann G."/>
            <person name="Liu S.X."/>
            <person name="Lam B."/>
            <person name="Sakano H."/>
            <person name="Wu T."/>
            <person name="Yu G."/>
            <person name="Miranda M."/>
            <person name="Quach H.L."/>
            <person name="Tripp M."/>
            <person name="Chang C.H."/>
            <person name="Lee J.M."/>
            <person name="Toriumi M.J."/>
            <person name="Chan M.M."/>
            <person name="Tang C.C."/>
            <person name="Onodera C.S."/>
            <person name="Deng J.M."/>
            <person name="Akiyama K."/>
            <person name="Ansari Y."/>
            <person name="Arakawa T."/>
            <person name="Banh J."/>
            <person name="Banno F."/>
            <person name="Bowser L."/>
            <person name="Brooks S.Y."/>
            <person name="Carninci P."/>
            <person name="Chao Q."/>
            <person name="Choy N."/>
            <person name="Enju A."/>
            <person name="Goldsmith A.D."/>
            <person name="Gurjal M."/>
            <person name="Hansen N.F."/>
            <person name="Hayashizaki Y."/>
            <person name="Johnson-Hopson C."/>
            <person name="Hsuan V.W."/>
            <person name="Iida K."/>
            <person name="Karnes M."/>
            <person name="Khan S."/>
            <person name="Koesema E."/>
            <person name="Ishida J."/>
            <person name="Jiang P.X."/>
            <person name="Jones T."/>
            <person name="Kawai J."/>
            <person name="Kamiya A."/>
            <person name="Meyers C."/>
            <person name="Nakajima M."/>
            <person name="Narusaka M."/>
            <person name="Seki M."/>
            <person name="Sakurai T."/>
            <person name="Satou M."/>
            <person name="Tamse R."/>
            <person name="Vaysberg M."/>
            <person name="Wallender E.K."/>
            <person name="Wong C."/>
            <person name="Yamamura Y."/>
            <person name="Yuan S."/>
            <person name="Shinozaki K."/>
            <person name="Davis R.W."/>
            <person name="Theologis A."/>
            <person name="Ecker J.R."/>
        </authorList>
    </citation>
    <scope>NUCLEOTIDE SEQUENCE [LARGE SCALE MRNA]</scope>
    <source>
        <strain>cv. Columbia</strain>
    </source>
</reference>
<reference key="8">
    <citation type="journal article" date="1998" name="Plant Physiol.">
        <title>A gene encoding proline dehydrogenase is not only induced by proline and hypoosmolarity, but is also developmentally regulated in the reproductive organs of Arabidopsis.</title>
        <authorList>
            <person name="Nakashima K."/>
            <person name="Satoh R."/>
            <person name="Kiyosue T."/>
            <person name="Yamaguchi-Shinozaki K."/>
            <person name="Shinozaki K."/>
        </authorList>
    </citation>
    <scope>FUNCTION</scope>
    <scope>TISSUE SPECIFICITY</scope>
    <scope>SUBCELLULAR LOCATION</scope>
    <scope>INDUCTION</scope>
</reference>
<reference key="9">
    <citation type="journal article" date="2003" name="Plant Cell Physiol.">
        <title>Toxicity of free proline revealed in an arabidopsis T-DNA-tagged mutant deficient in proline dehydrogenase.</title>
        <authorList>
            <person name="Nanjo T."/>
            <person name="Fujita M."/>
            <person name="Seki M."/>
            <person name="Kato T."/>
            <person name="Tabata S."/>
            <person name="Shinozaki K."/>
        </authorList>
    </citation>
    <scope>DISRUPTION PHENOTYPE</scope>
</reference>
<reference key="10">
    <citation type="journal article" date="2006" name="EMBO J.">
        <title>Combinatorial control of Arabidopsis proline dehydrogenase transcription by specific heterodimerisation of bZIP transcription factors.</title>
        <authorList>
            <person name="Weltmeier F."/>
            <person name="Ehlert A."/>
            <person name="Mayer C.S."/>
            <person name="Dietrich K."/>
            <person name="Wang X."/>
            <person name="Schuetze K."/>
            <person name="Alonso R."/>
            <person name="Harter K."/>
            <person name="Vicente-Carbajosa J."/>
            <person name="Droege-Laser W."/>
        </authorList>
    </citation>
    <scope>INDUCTION BY BZIP53</scope>
    <source>
        <strain>cv. Columbia</strain>
    </source>
</reference>
<reference key="11">
    <citation type="journal article" date="2007" name="Planta">
        <title>Two tobacco proline dehydrogenases are differentially regulated and play a role in early plant development.</title>
        <authorList>
            <person name="Ribarits A."/>
            <person name="Abdullaev A."/>
            <person name="Tashpulatov A."/>
            <person name="Richter A."/>
            <person name="Heberle-Bors E."/>
            <person name="Touraev A."/>
        </authorList>
    </citation>
    <scope>INDUCTION</scope>
</reference>
<reference key="12">
    <citation type="journal article" date="2010" name="BMC Plant Biol.">
        <title>Non-redundant functions of two proline dehydrogenase isoforms in Arabidopsis.</title>
        <authorList>
            <person name="Funck D."/>
            <person name="Eckard S."/>
            <person name="Mueller G."/>
        </authorList>
    </citation>
    <scope>FUNCTION</scope>
    <scope>INDUCTION</scope>
    <scope>TISSUE SPECIFICITY</scope>
    <scope>SUBCELLULAR LOCATION</scope>
    <scope>DISRUPTION PHENOTYPE</scope>
</reference>
<reference key="13">
    <citation type="journal article" date="2015" name="J. Exp. Bot.">
        <title>Identification of cleavage sites and substrate proteins for two mitochondrial intermediate peptidases in Arabidopsis thaliana.</title>
        <authorList>
            <person name="Carrie C."/>
            <person name="Venne A.S."/>
            <person name="Zahedi R.P."/>
            <person name="Soll J."/>
        </authorList>
    </citation>
    <scope>IDENTIFICATION BY MASS SPECTROMETRY</scope>
    <scope>CLEAVAGE OF TRANSIT PEPTIDE AFTER PHE-72</scope>
</reference>
<name>PROD1_ARATH</name>
<feature type="transit peptide" description="Mitochondrion" evidence="5">
    <location>
        <begin position="1"/>
        <end position="72"/>
    </location>
</feature>
<feature type="chain" id="PRO_0000025804" description="Proline dehydrogenase 1, mitochondrial">
    <location>
        <begin position="73"/>
        <end position="499"/>
    </location>
</feature>
<feature type="sequence conflict" description="In Ref. 1; AAB40615." evidence="8" ref="1">
    <original>A</original>
    <variation>V</variation>
    <location>
        <position position="30"/>
    </location>
</feature>
<feature type="sequence conflict" description="In Ref. 1; AAB40615." evidence="8" ref="1">
    <original>P</original>
    <variation>T</variation>
    <location>
        <position position="46"/>
    </location>
</feature>
<feature type="sequence conflict" description="In Ref. 1; AAB40615." evidence="8" ref="1">
    <original>H</original>
    <variation>Q</variation>
    <location>
        <position position="51"/>
    </location>
</feature>
<feature type="sequence conflict" description="In Ref. 2; CAA65783." evidence="8" ref="2">
    <original>A</original>
    <variation>P</variation>
    <location>
        <position position="91"/>
    </location>
</feature>
<feature type="sequence conflict" description="In Ref. 3; BAA11682." evidence="8" ref="3">
    <original>A</original>
    <variation>R</variation>
    <location>
        <position position="355"/>
    </location>
</feature>
<feature type="sequence conflict" description="In Ref. 2; CAA65783." evidence="8" ref="2">
    <original>L</original>
    <variation>V</variation>
    <location>
        <position position="361"/>
    </location>
</feature>
<feature type="sequence conflict" description="In Ref. 7; AAL67111." evidence="8" ref="7">
    <original>V</original>
    <variation>A</variation>
    <location>
        <position position="398"/>
    </location>
</feature>
<feature type="sequence conflict" description="In Ref. 7; AAL16138." evidence="8" ref="7">
    <original>K</original>
    <variation>R</variation>
    <location>
        <position position="425"/>
    </location>
</feature>
<feature type="sequence conflict" description="In Ref. 1; AAB40615." evidence="8" ref="1">
    <original>A</original>
    <variation>P</variation>
    <location>
        <position position="477"/>
    </location>
</feature>
<keyword id="KW-0274">FAD</keyword>
<keyword id="KW-0285">Flavoprotein</keyword>
<keyword id="KW-0496">Mitochondrion</keyword>
<keyword id="KW-0560">Oxidoreductase</keyword>
<keyword id="KW-0642">Proline metabolism</keyword>
<keyword id="KW-1185">Reference proteome</keyword>
<keyword id="KW-0346">Stress response</keyword>
<keyword id="KW-0809">Transit peptide</keyword>
<protein>
    <recommendedName>
        <fullName>Proline dehydrogenase 1, mitochondrial</fullName>
        <ecNumber evidence="10">1.5.5.2</ecNumber>
    </recommendedName>
    <alternativeName>
        <fullName>Osmotic stress-induced proline dehydrogenase</fullName>
    </alternativeName>
    <alternativeName>
        <fullName>Proline oxidase</fullName>
    </alternativeName>
    <alternativeName>
        <fullName>Protein EARLY RESPONSIVE TO DEHYDRATION 5</fullName>
    </alternativeName>
</protein>
<dbReference type="EC" id="1.5.5.2" evidence="10"/>
<dbReference type="EMBL" id="U59508">
    <property type="protein sequence ID" value="AAB40615.1"/>
    <property type="molecule type" value="mRNA"/>
</dbReference>
<dbReference type="EMBL" id="X97075">
    <property type="protein sequence ID" value="CAA65783.1"/>
    <property type="molecule type" value="mRNA"/>
</dbReference>
<dbReference type="EMBL" id="D83025">
    <property type="protein sequence ID" value="BAA11682.1"/>
    <property type="molecule type" value="mRNA"/>
</dbReference>
<dbReference type="EMBL" id="AB028614">
    <property type="protein sequence ID" value="BAB02917.1"/>
    <property type="molecule type" value="Genomic_DNA"/>
</dbReference>
<dbReference type="EMBL" id="AP001296">
    <property type="protein sequence ID" value="BAB02917.1"/>
    <property type="status" value="JOINED"/>
    <property type="molecule type" value="Genomic_DNA"/>
</dbReference>
<dbReference type="EMBL" id="CP002686">
    <property type="protein sequence ID" value="AEE77659.1"/>
    <property type="molecule type" value="Genomic_DNA"/>
</dbReference>
<dbReference type="EMBL" id="CP002686">
    <property type="protein sequence ID" value="ANM65921.1"/>
    <property type="molecule type" value="Genomic_DNA"/>
</dbReference>
<dbReference type="EMBL" id="AF428306">
    <property type="protein sequence ID" value="AAL16138.1"/>
    <property type="molecule type" value="mRNA"/>
</dbReference>
<dbReference type="EMBL" id="AY074571">
    <property type="protein sequence ID" value="AAL67111.1"/>
    <property type="molecule type" value="mRNA"/>
</dbReference>
<dbReference type="RefSeq" id="NP_001319672.1">
    <property type="nucleotide sequence ID" value="NM_001339059.1"/>
</dbReference>
<dbReference type="RefSeq" id="NP_189701.3">
    <property type="nucleotide sequence ID" value="NM_113981.6"/>
</dbReference>
<dbReference type="SMR" id="P92983"/>
<dbReference type="BioGRID" id="8159">
    <property type="interactions" value="1"/>
</dbReference>
<dbReference type="FunCoup" id="P92983">
    <property type="interactions" value="887"/>
</dbReference>
<dbReference type="IntAct" id="P92983">
    <property type="interactions" value="2"/>
</dbReference>
<dbReference type="STRING" id="3702.P92983"/>
<dbReference type="iPTMnet" id="P92983"/>
<dbReference type="PaxDb" id="3702-AT3G30775.1"/>
<dbReference type="ProteomicsDB" id="226217"/>
<dbReference type="DNASU" id="822833"/>
<dbReference type="EnsemblPlants" id="AT3G30775.1">
    <property type="protein sequence ID" value="AT3G30775.1"/>
    <property type="gene ID" value="AT3G30775"/>
</dbReference>
<dbReference type="EnsemblPlants" id="AT3G30775.2">
    <property type="protein sequence ID" value="AT3G30775.2"/>
    <property type="gene ID" value="AT3G30775"/>
</dbReference>
<dbReference type="GeneID" id="822833"/>
<dbReference type="Gramene" id="AT3G30775.1">
    <property type="protein sequence ID" value="AT3G30775.1"/>
    <property type="gene ID" value="AT3G30775"/>
</dbReference>
<dbReference type="Gramene" id="AT3G30775.2">
    <property type="protein sequence ID" value="AT3G30775.2"/>
    <property type="gene ID" value="AT3G30775"/>
</dbReference>
<dbReference type="KEGG" id="ath:AT3G30775"/>
<dbReference type="Araport" id="AT3G30775"/>
<dbReference type="TAIR" id="AT3G30775">
    <property type="gene designation" value="ERD5"/>
</dbReference>
<dbReference type="eggNOG" id="KOG0186">
    <property type="taxonomic scope" value="Eukaryota"/>
</dbReference>
<dbReference type="HOGENOM" id="CLU_018202_3_0_1"/>
<dbReference type="InParanoid" id="P92983"/>
<dbReference type="OMA" id="WMQDAAD"/>
<dbReference type="PhylomeDB" id="P92983"/>
<dbReference type="BioCyc" id="ARA:AT3G30775-MONOMER"/>
<dbReference type="BioCyc" id="MetaCyc:AT3G30775-MONOMER"/>
<dbReference type="BRENDA" id="1.5.5.2">
    <property type="organism ID" value="399"/>
</dbReference>
<dbReference type="UniPathway" id="UPA00261">
    <property type="reaction ID" value="UER00373"/>
</dbReference>
<dbReference type="PRO" id="PR:P92983"/>
<dbReference type="Proteomes" id="UP000006548">
    <property type="component" value="Chromosome 3"/>
</dbReference>
<dbReference type="ExpressionAtlas" id="P92983">
    <property type="expression patterns" value="baseline and differential"/>
</dbReference>
<dbReference type="GO" id="GO:0005739">
    <property type="term" value="C:mitochondrion"/>
    <property type="evidence" value="ECO:0000314"/>
    <property type="project" value="TAIR"/>
</dbReference>
<dbReference type="GO" id="GO:0004657">
    <property type="term" value="F:proline dehydrogenase activity"/>
    <property type="evidence" value="ECO:0000315"/>
    <property type="project" value="TAIR"/>
</dbReference>
<dbReference type="GO" id="GO:0071456">
    <property type="term" value="P:cellular response to hypoxia"/>
    <property type="evidence" value="ECO:0007007"/>
    <property type="project" value="TAIR"/>
</dbReference>
<dbReference type="GO" id="GO:0042742">
    <property type="term" value="P:defense response to bacterium"/>
    <property type="evidence" value="ECO:0000315"/>
    <property type="project" value="TAIR"/>
</dbReference>
<dbReference type="GO" id="GO:0010133">
    <property type="term" value="P:proline catabolic process to glutamate"/>
    <property type="evidence" value="ECO:0007669"/>
    <property type="project" value="UniProtKB-UniPathway"/>
</dbReference>
<dbReference type="GO" id="GO:0006979">
    <property type="term" value="P:response to oxidative stress"/>
    <property type="evidence" value="ECO:0000270"/>
    <property type="project" value="TAIR"/>
</dbReference>
<dbReference type="GO" id="GO:0009414">
    <property type="term" value="P:response to water deprivation"/>
    <property type="evidence" value="ECO:0000316"/>
    <property type="project" value="TAIR"/>
</dbReference>
<dbReference type="Gene3D" id="3.20.20.220">
    <property type="match status" value="1"/>
</dbReference>
<dbReference type="InterPro" id="IPR029041">
    <property type="entry name" value="FAD-linked_oxidoreductase-like"/>
</dbReference>
<dbReference type="InterPro" id="IPR002872">
    <property type="entry name" value="Proline_DH_dom"/>
</dbReference>
<dbReference type="InterPro" id="IPR015659">
    <property type="entry name" value="Proline_oxidase"/>
</dbReference>
<dbReference type="PANTHER" id="PTHR13914:SF0">
    <property type="entry name" value="PROLINE DEHYDROGENASE 1, MITOCHONDRIAL"/>
    <property type="match status" value="1"/>
</dbReference>
<dbReference type="PANTHER" id="PTHR13914">
    <property type="entry name" value="PROLINE OXIDASE"/>
    <property type="match status" value="1"/>
</dbReference>
<dbReference type="Pfam" id="PF01619">
    <property type="entry name" value="Pro_dh"/>
    <property type="match status" value="1"/>
</dbReference>
<dbReference type="SUPFAM" id="SSF51730">
    <property type="entry name" value="FAD-linked oxidoreductase"/>
    <property type="match status" value="1"/>
</dbReference>
<evidence type="ECO:0000269" key="1">
    <source>
    </source>
</evidence>
<evidence type="ECO:0000269" key="2">
    <source>
    </source>
</evidence>
<evidence type="ECO:0000269" key="3">
    <source>
    </source>
</evidence>
<evidence type="ECO:0000269" key="4">
    <source>
    </source>
</evidence>
<evidence type="ECO:0000269" key="5">
    <source>
    </source>
</evidence>
<evidence type="ECO:0000269" key="6">
    <source>
    </source>
</evidence>
<evidence type="ECO:0000269" key="7">
    <source>
    </source>
</evidence>
<evidence type="ECO:0000305" key="8"/>
<evidence type="ECO:0000305" key="9">
    <source>
    </source>
</evidence>
<evidence type="ECO:0000305" key="10">
    <source>
    </source>
</evidence>
<sequence>MATRLLRTNFIRRSYRLPAFSPVGPPTVTASTAVVPEILSFGQQAPEPPLHHPKPTEQSHDGLDLSDQARLFSSIPTSDLLRSTAVLHAAAIGPMVDLGTWVMSSKLMDASVTRGMVLGLVKSTFYDHFCAGEDADAAAERVRSVYEATGLKGMLVYGVEHADDAVSCDDNMQQFIRTIEAAKSLPTSHFSSVVVKITAICPISLLKRVSDLLRWEYKSPNFKLSWKLKSFPVFSESSPLYHTNSEPEPLTAEEERELEAAHGRIQEICRKCQESNVPLLIDAEDTILQPAIDYMAYSSAIMFNADKDRPIVYNTIQAYLRDAGERLHLAVQNAEKENVPMGFKLVRGAYMSSEASLADSLGCKSPVHDTIQDTHSCYNDCMTFLMEKASNGSGFGVVLATHNADSGRLASRKASDLGIDKQNGKIEFAQLYGMSDALSFGLKRAGFNVSKYMPFGPVATAIPYLLRRAYENRGMMATGAHDRQLMRMELKRRLIAGIA</sequence>
<accession>P92983</accession>
<accession>P92945</accession>
<accession>Q8VXV1</accession>
<accession>Q944L2</accession>
<accession>Q96281</accession>
<gene>
    <name type="primary">POX1</name>
    <name type="synonym">ERD5</name>
    <name type="synonym">PRO1</name>
    <name type="synonym">PRODH1</name>
    <name type="ordered locus">At3g30775</name>
    <name type="ORF">MIF6.16</name>
    <name type="ORF">MIF6.19</name>
</gene>
<proteinExistence type="evidence at protein level"/>